<feature type="initiator methionine" description="Removed" evidence="2">
    <location>
        <position position="1"/>
    </location>
</feature>
<feature type="chain" id="PRO_0000263071" description="L-lactate dehydrogenase A chain">
    <location>
        <begin position="2"/>
        <end position="332"/>
    </location>
</feature>
<feature type="active site" description="Proton acceptor" evidence="1">
    <location>
        <position position="193"/>
    </location>
</feature>
<feature type="binding site" evidence="1">
    <location>
        <begin position="29"/>
        <end position="57"/>
    </location>
    <ligand>
        <name>NAD(+)</name>
        <dbReference type="ChEBI" id="CHEBI:57540"/>
    </ligand>
</feature>
<feature type="binding site" evidence="1">
    <location>
        <position position="106"/>
    </location>
    <ligand>
        <name>substrate</name>
    </ligand>
</feature>
<feature type="binding site" evidence="1">
    <location>
        <position position="138"/>
    </location>
    <ligand>
        <name>NAD(+)</name>
        <dbReference type="ChEBI" id="CHEBI:57540"/>
    </ligand>
</feature>
<feature type="binding site" evidence="1">
    <location>
        <position position="138"/>
    </location>
    <ligand>
        <name>substrate</name>
    </ligand>
</feature>
<feature type="binding site" evidence="1">
    <location>
        <position position="169"/>
    </location>
    <ligand>
        <name>substrate</name>
    </ligand>
</feature>
<feature type="binding site" evidence="1">
    <location>
        <position position="248"/>
    </location>
    <ligand>
        <name>substrate</name>
    </ligand>
</feature>
<feature type="modified residue" description="N-acetylalanine" evidence="2">
    <location>
        <position position="2"/>
    </location>
</feature>
<feature type="modified residue" description="N6-acetyllysine; alternate" evidence="2">
    <location>
        <position position="5"/>
    </location>
</feature>
<feature type="modified residue" description="N6-succinyllysine; alternate" evidence="4">
    <location>
        <position position="5"/>
    </location>
</feature>
<feature type="modified residue" description="N6-acetyllysine" evidence="2">
    <location>
        <position position="14"/>
    </location>
</feature>
<feature type="modified residue" description="N6-acetyllysine; alternate" evidence="2">
    <location>
        <position position="57"/>
    </location>
</feature>
<feature type="modified residue" description="N6-acetyllysine" evidence="2">
    <location>
        <position position="81"/>
    </location>
</feature>
<feature type="modified residue" description="N6-acetyllysine; alternate" evidence="2">
    <location>
        <position position="118"/>
    </location>
</feature>
<feature type="modified residue" description="N6-succinyllysine; alternate" evidence="4">
    <location>
        <position position="118"/>
    </location>
</feature>
<feature type="modified residue" description="N6-acetyllysine" evidence="2">
    <location>
        <position position="126"/>
    </location>
</feature>
<feature type="modified residue" description="N6-acetyllysine" evidence="4">
    <location>
        <position position="224"/>
    </location>
</feature>
<feature type="modified residue" description="N6-acetyllysine" evidence="4">
    <location>
        <position position="232"/>
    </location>
</feature>
<feature type="modified residue" description="Phosphotyrosine" evidence="4">
    <location>
        <position position="239"/>
    </location>
</feature>
<feature type="modified residue" description="N6-acetyllysine" evidence="4">
    <location>
        <position position="243"/>
    </location>
</feature>
<feature type="modified residue" description="Phosphothreonine" evidence="3">
    <location>
        <position position="309"/>
    </location>
</feature>
<feature type="modified residue" description="N6-acetyllysine; alternate" evidence="2">
    <location>
        <position position="318"/>
    </location>
</feature>
<feature type="modified residue" description="N6-succinyllysine; alternate" evidence="4">
    <location>
        <position position="318"/>
    </location>
</feature>
<feature type="modified residue" description="Phosphothreonine" evidence="3">
    <location>
        <position position="322"/>
    </location>
</feature>
<feature type="cross-link" description="Glycyl lysine isopeptide (Lys-Gly) (interchain with G-Cter in SUMO2); alternate" evidence="2">
    <location>
        <position position="57"/>
    </location>
</feature>
<evidence type="ECO:0000250" key="1"/>
<evidence type="ECO:0000250" key="2">
    <source>
        <dbReference type="UniProtKB" id="P00338"/>
    </source>
</evidence>
<evidence type="ECO:0000250" key="3">
    <source>
        <dbReference type="UniProtKB" id="P04642"/>
    </source>
</evidence>
<evidence type="ECO:0000250" key="4">
    <source>
        <dbReference type="UniProtKB" id="P06151"/>
    </source>
</evidence>
<evidence type="ECO:0000305" key="5"/>
<keyword id="KW-0007">Acetylation</keyword>
<keyword id="KW-0963">Cytoplasm</keyword>
<keyword id="KW-1017">Isopeptide bond</keyword>
<keyword id="KW-0520">NAD</keyword>
<keyword id="KW-0560">Oxidoreductase</keyword>
<keyword id="KW-0597">Phosphoprotein</keyword>
<keyword id="KW-1185">Reference proteome</keyword>
<keyword id="KW-0832">Ubl conjugation</keyword>
<accession>A0A1F3</accession>
<dbReference type="EC" id="1.1.1.27" evidence="2"/>
<dbReference type="EMBL" id="DQ991437">
    <property type="protein sequence ID" value="ABJ90429.1"/>
    <property type="molecule type" value="mRNA"/>
</dbReference>
<dbReference type="SMR" id="A0A1F3"/>
<dbReference type="UniPathway" id="UPA00554">
    <property type="reaction ID" value="UER00611"/>
</dbReference>
<dbReference type="Proteomes" id="UP000694520">
    <property type="component" value="Unplaced"/>
</dbReference>
<dbReference type="GO" id="GO:0005737">
    <property type="term" value="C:cytoplasm"/>
    <property type="evidence" value="ECO:0007669"/>
    <property type="project" value="UniProtKB-SubCell"/>
</dbReference>
<dbReference type="GO" id="GO:0004459">
    <property type="term" value="F:L-lactate dehydrogenase activity"/>
    <property type="evidence" value="ECO:0007669"/>
    <property type="project" value="UniProtKB-EC"/>
</dbReference>
<dbReference type="GO" id="GO:0006089">
    <property type="term" value="P:lactate metabolic process"/>
    <property type="evidence" value="ECO:0007669"/>
    <property type="project" value="TreeGrafter"/>
</dbReference>
<dbReference type="CDD" id="cd05293">
    <property type="entry name" value="LDH_1"/>
    <property type="match status" value="1"/>
</dbReference>
<dbReference type="FunFam" id="3.40.50.720:FF:000029">
    <property type="entry name" value="L-lactate dehydrogenase A chain"/>
    <property type="match status" value="1"/>
</dbReference>
<dbReference type="FunFam" id="3.90.110.10:FF:000003">
    <property type="entry name" value="L-lactate dehydrogenase A chain"/>
    <property type="match status" value="1"/>
</dbReference>
<dbReference type="Gene3D" id="3.90.110.10">
    <property type="entry name" value="Lactate dehydrogenase/glycoside hydrolase, family 4, C-terminal"/>
    <property type="match status" value="1"/>
</dbReference>
<dbReference type="Gene3D" id="3.40.50.720">
    <property type="entry name" value="NAD(P)-binding Rossmann-like Domain"/>
    <property type="match status" value="1"/>
</dbReference>
<dbReference type="HAMAP" id="MF_00488">
    <property type="entry name" value="Lactate_dehydrog"/>
    <property type="match status" value="1"/>
</dbReference>
<dbReference type="InterPro" id="IPR001557">
    <property type="entry name" value="L-lactate/malate_DH"/>
</dbReference>
<dbReference type="InterPro" id="IPR011304">
    <property type="entry name" value="L-lactate_DH"/>
</dbReference>
<dbReference type="InterPro" id="IPR018177">
    <property type="entry name" value="L-lactate_DH_AS"/>
</dbReference>
<dbReference type="InterPro" id="IPR022383">
    <property type="entry name" value="Lactate/malate_DH_C"/>
</dbReference>
<dbReference type="InterPro" id="IPR001236">
    <property type="entry name" value="Lactate/malate_DH_N"/>
</dbReference>
<dbReference type="InterPro" id="IPR015955">
    <property type="entry name" value="Lactate_DH/Glyco_Ohase_4_C"/>
</dbReference>
<dbReference type="InterPro" id="IPR036291">
    <property type="entry name" value="NAD(P)-bd_dom_sf"/>
</dbReference>
<dbReference type="NCBIfam" id="TIGR01771">
    <property type="entry name" value="L-LDH-NAD"/>
    <property type="match status" value="1"/>
</dbReference>
<dbReference type="NCBIfam" id="NF000824">
    <property type="entry name" value="PRK00066.1"/>
    <property type="match status" value="1"/>
</dbReference>
<dbReference type="NCBIfam" id="NF004863">
    <property type="entry name" value="PRK06223.1"/>
    <property type="match status" value="1"/>
</dbReference>
<dbReference type="PANTHER" id="PTHR43128">
    <property type="entry name" value="L-2-HYDROXYCARBOXYLATE DEHYDROGENASE (NAD(P)(+))"/>
    <property type="match status" value="1"/>
</dbReference>
<dbReference type="PANTHER" id="PTHR43128:SF10">
    <property type="entry name" value="L-LACTATE DEHYDROGENASE A CHAIN"/>
    <property type="match status" value="1"/>
</dbReference>
<dbReference type="Pfam" id="PF02866">
    <property type="entry name" value="Ldh_1_C"/>
    <property type="match status" value="1"/>
</dbReference>
<dbReference type="Pfam" id="PF00056">
    <property type="entry name" value="Ldh_1_N"/>
    <property type="match status" value="1"/>
</dbReference>
<dbReference type="PIRSF" id="PIRSF000102">
    <property type="entry name" value="Lac_mal_DH"/>
    <property type="match status" value="1"/>
</dbReference>
<dbReference type="PRINTS" id="PR00086">
    <property type="entry name" value="LLDHDRGNASE"/>
</dbReference>
<dbReference type="SUPFAM" id="SSF56327">
    <property type="entry name" value="LDH C-terminal domain-like"/>
    <property type="match status" value="1"/>
</dbReference>
<dbReference type="SUPFAM" id="SSF51735">
    <property type="entry name" value="NAD(P)-binding Rossmann-fold domains"/>
    <property type="match status" value="1"/>
</dbReference>
<dbReference type="PROSITE" id="PS00064">
    <property type="entry name" value="L_LDH"/>
    <property type="match status" value="1"/>
</dbReference>
<sequence>MATLKDQLIQNLLKEEHVPQNKITIVGVGAVGMACAISILMKDLADEVALVDVMEDKLKGEMMDLQHGSLFLRTPKIVSGKDYNVTANSRLVIITAGARQQEGESRLNLVQRNVNIFKFIIPNIVKYSPNCKLLVVSNPVDILTYVAWKISGFPKNRVIGSGCNLDSARFRYLMGERLGVHPLSCHGWILGEHGDSSVPVWSGVNVAGVSLKNLHPELGTDADKEQWKAVHKQVVDSAYEVIKLKGYTSWAIGLSVVDLAESIMKNLRRVHPISTMIKGLYGIKEDVFLSVPCILGQNGISDVVKVTLTHEEEAYLKKSADTLWGIQKELQF</sequence>
<reference key="1">
    <citation type="submission" date="2006-09" db="EMBL/GenBank/DDBJ databases">
        <title>Cloning and homology modeling of yak lactate dehydrogenase A.</title>
        <authorList>
            <person name="Zheng Y."/>
            <person name="He Q."/>
        </authorList>
    </citation>
    <scope>NUCLEOTIDE SEQUENCE [MRNA]</scope>
    <source>
        <tissue>Muscle</tissue>
    </source>
</reference>
<proteinExistence type="evidence at transcript level"/>
<organism>
    <name type="scientific">Bos mutus grunniens</name>
    <name type="common">Wild yak</name>
    <name type="synonym">Bos grunniens</name>
    <dbReference type="NCBI Taxonomy" id="30521"/>
    <lineage>
        <taxon>Eukaryota</taxon>
        <taxon>Metazoa</taxon>
        <taxon>Chordata</taxon>
        <taxon>Craniata</taxon>
        <taxon>Vertebrata</taxon>
        <taxon>Euteleostomi</taxon>
        <taxon>Mammalia</taxon>
        <taxon>Eutheria</taxon>
        <taxon>Laurasiatheria</taxon>
        <taxon>Artiodactyla</taxon>
        <taxon>Ruminantia</taxon>
        <taxon>Pecora</taxon>
        <taxon>Bovidae</taxon>
        <taxon>Bovinae</taxon>
        <taxon>Bos</taxon>
    </lineage>
</organism>
<gene>
    <name type="primary">LDHA</name>
</gene>
<comment type="function">
    <text evidence="2">Interconverts simultaneously and stereospecifically pyruvate and lactate with concomitant interconversion of NADH and NAD(+).</text>
</comment>
<comment type="catalytic activity">
    <reaction evidence="2">
        <text>(S)-lactate + NAD(+) = pyruvate + NADH + H(+)</text>
        <dbReference type="Rhea" id="RHEA:23444"/>
        <dbReference type="ChEBI" id="CHEBI:15361"/>
        <dbReference type="ChEBI" id="CHEBI:15378"/>
        <dbReference type="ChEBI" id="CHEBI:16651"/>
        <dbReference type="ChEBI" id="CHEBI:57540"/>
        <dbReference type="ChEBI" id="CHEBI:57945"/>
        <dbReference type="EC" id="1.1.1.27"/>
    </reaction>
    <physiologicalReaction direction="left-to-right" evidence="2">
        <dbReference type="Rhea" id="RHEA:23445"/>
    </physiologicalReaction>
    <physiologicalReaction direction="right-to-left" evidence="2">
        <dbReference type="Rhea" id="RHEA:23446"/>
    </physiologicalReaction>
</comment>
<comment type="pathway">
    <text evidence="2">Fermentation; pyruvate fermentation to lactate; (S)-lactate from pyruvate: step 1/1.</text>
</comment>
<comment type="subunit">
    <text evidence="2">Homotetramer. Interacts with PTEN upstream reading frame protein MP31.</text>
</comment>
<comment type="subcellular location">
    <subcellularLocation>
        <location evidence="1">Cytoplasm</location>
    </subcellularLocation>
</comment>
<comment type="PTM">
    <text evidence="2">ISGylated.</text>
</comment>
<comment type="similarity">
    <text evidence="5">Belongs to the LDH/MDH superfamily. LDH family.</text>
</comment>
<protein>
    <recommendedName>
        <fullName>L-lactate dehydrogenase A chain</fullName>
        <shortName>LDH-A</shortName>
        <ecNumber evidence="2">1.1.1.27</ecNumber>
    </recommendedName>
</protein>
<name>LDHA_BOSMU</name>